<sequence length="924" mass="96651">MAGKARVHELAKELGVTSKEVLARLNEQGEFVKSASSTVEAPVARRLRESFGGIKPAADKGAEQVATKAQAKRLGESLDQTLDRALDKAVAGNGATTAAPVQVDHSAAVVPIVAGEGPSTAHREELAPPAGQPSEQPGVPLPGQQGTPAAPHPGHPGMPTGPHPGPAPKPGGRPPRVGNNPFSSAQSVARPIPRPPAPRPSASPSSMSPRPGGAVGGGGPRPPRTGVPRPGGGRPGAPVGGRSDAGGGNYRGGGVGALPGGGSGGFRGRPGGGGHGGGGRPGQRGGAAGAFGRPGGAPRRGRKSKRQKRQEYDSMQAPVVGGVRLPHGNGETIRLARGASLSDFAEKIDANPAALVQALFNLGEMVTATQSVGDETLELLGSEMNYNVQVVSPEDEDRELLEPFDLTYGEDQGDEDELQVRPPVVTVMGHVDHGKTRLLDTIRKANVREAEAGGITQHIGAYQVGVDLDGSERLITFIDTPGHEAFTAMRARGAKATDIAILVVAADDGVMPQTVEAINHAQAADVPIVVAVNKIDKEGADPAKIRGQLTEYGLVAEDFGGDTMFIDISAKVGTNIEALLEAVLLTADAALDLRANSGMEAQGVAIEAHLDRGRGPVATVLVQRGTLRIGDSVVAGDAYGRVRRMVDEHGVDIEAALPSSPVQVIGFTSVPGAGDNFLVVDEDRIARQIADRRSARKRNALAARSRKRISLEDLDSALKETSQLNLILKGDNAGTVEALEEALMGIQVDDEVALRVIDRGVGGITETNVNLASASDAIIIGFNVRAEGKATELASREGVEIRYYLVIYQAIDDIEKALRGMLKPIYEENQLGRAEIRALFRSSKVGIIAGCIISSGVVRRNAKVRLLRDNIVVTDNLTVTSLRREKDDVTEVREGFECGMTLGYSDIKEGDVIESYELVEKQRA</sequence>
<comment type="function">
    <text evidence="2">One of the essential components for the initiation of protein synthesis. Protects formylmethionyl-tRNA from spontaneous hydrolysis and promotes its binding to the 30S ribosomal subunits. Also involved in the hydrolysis of GTP during the formation of the 70S ribosomal complex.</text>
</comment>
<comment type="subcellular location">
    <subcellularLocation>
        <location evidence="2">Cytoplasm</location>
    </subcellularLocation>
</comment>
<comment type="similarity">
    <text evidence="2">Belongs to the TRAFAC class translation factor GTPase superfamily. Classic translation factor GTPase family. IF-2 subfamily.</text>
</comment>
<keyword id="KW-0963">Cytoplasm</keyword>
<keyword id="KW-0342">GTP-binding</keyword>
<keyword id="KW-0396">Initiation factor</keyword>
<keyword id="KW-0547">Nucleotide-binding</keyword>
<keyword id="KW-0648">Protein biosynthesis</keyword>
<protein>
    <recommendedName>
        <fullName evidence="2">Translation initiation factor IF-2</fullName>
    </recommendedName>
</protein>
<name>IF2_MYCLB</name>
<proteinExistence type="inferred from homology"/>
<reference key="1">
    <citation type="journal article" date="2009" name="Nat. Genet.">
        <title>Comparative genomic and phylogeographic analysis of Mycobacterium leprae.</title>
        <authorList>
            <person name="Monot M."/>
            <person name="Honore N."/>
            <person name="Garnier T."/>
            <person name="Zidane N."/>
            <person name="Sherafi D."/>
            <person name="Paniz-Mondolfi A."/>
            <person name="Matsuoka M."/>
            <person name="Taylor G.M."/>
            <person name="Donoghue H.D."/>
            <person name="Bouwman A."/>
            <person name="Mays S."/>
            <person name="Watson C."/>
            <person name="Lockwood D."/>
            <person name="Khamispour A."/>
            <person name="Dowlati Y."/>
            <person name="Jianping S."/>
            <person name="Rea T.H."/>
            <person name="Vera-Cabrera L."/>
            <person name="Stefani M.M."/>
            <person name="Banu S."/>
            <person name="Macdonald M."/>
            <person name="Sapkota B.R."/>
            <person name="Spencer J.S."/>
            <person name="Thomas J."/>
            <person name="Harshman K."/>
            <person name="Singh P."/>
            <person name="Busso P."/>
            <person name="Gattiker A."/>
            <person name="Rougemont J."/>
            <person name="Brennan P.J."/>
            <person name="Cole S.T."/>
        </authorList>
    </citation>
    <scope>NUCLEOTIDE SEQUENCE [LARGE SCALE GENOMIC DNA]</scope>
    <source>
        <strain>Br4923</strain>
    </source>
</reference>
<feature type="chain" id="PRO_1000118769" description="Translation initiation factor IF-2">
    <location>
        <begin position="1"/>
        <end position="924"/>
    </location>
</feature>
<feature type="domain" description="tr-type G">
    <location>
        <begin position="420"/>
        <end position="591"/>
    </location>
</feature>
<feature type="region of interest" description="Disordered" evidence="3">
    <location>
        <begin position="118"/>
        <end position="325"/>
    </location>
</feature>
<feature type="region of interest" description="G1" evidence="1">
    <location>
        <begin position="429"/>
        <end position="436"/>
    </location>
</feature>
<feature type="region of interest" description="G2" evidence="1">
    <location>
        <begin position="454"/>
        <end position="458"/>
    </location>
</feature>
<feature type="region of interest" description="G3" evidence="1">
    <location>
        <begin position="479"/>
        <end position="482"/>
    </location>
</feature>
<feature type="region of interest" description="G4" evidence="1">
    <location>
        <begin position="533"/>
        <end position="536"/>
    </location>
</feature>
<feature type="region of interest" description="G5" evidence="1">
    <location>
        <begin position="569"/>
        <end position="571"/>
    </location>
</feature>
<feature type="compositionally biased region" description="Pro residues" evidence="3">
    <location>
        <begin position="150"/>
        <end position="173"/>
    </location>
</feature>
<feature type="compositionally biased region" description="Pro residues" evidence="3">
    <location>
        <begin position="192"/>
        <end position="201"/>
    </location>
</feature>
<feature type="compositionally biased region" description="Low complexity" evidence="3">
    <location>
        <begin position="202"/>
        <end position="212"/>
    </location>
</feature>
<feature type="compositionally biased region" description="Gly residues" evidence="3">
    <location>
        <begin position="229"/>
        <end position="295"/>
    </location>
</feature>
<feature type="compositionally biased region" description="Basic residues" evidence="3">
    <location>
        <begin position="299"/>
        <end position="308"/>
    </location>
</feature>
<feature type="binding site" evidence="2">
    <location>
        <begin position="429"/>
        <end position="436"/>
    </location>
    <ligand>
        <name>GTP</name>
        <dbReference type="ChEBI" id="CHEBI:37565"/>
    </ligand>
</feature>
<feature type="binding site" evidence="2">
    <location>
        <begin position="479"/>
        <end position="483"/>
    </location>
    <ligand>
        <name>GTP</name>
        <dbReference type="ChEBI" id="CHEBI:37565"/>
    </ligand>
</feature>
<feature type="binding site" evidence="2">
    <location>
        <begin position="533"/>
        <end position="536"/>
    </location>
    <ligand>
        <name>GTP</name>
        <dbReference type="ChEBI" id="CHEBI:37565"/>
    </ligand>
</feature>
<accession>B8ZRT4</accession>
<gene>
    <name evidence="2" type="primary">infB</name>
    <name type="ordered locus">MLBr01556</name>
</gene>
<evidence type="ECO:0000250" key="1"/>
<evidence type="ECO:0000255" key="2">
    <source>
        <dbReference type="HAMAP-Rule" id="MF_00100"/>
    </source>
</evidence>
<evidence type="ECO:0000256" key="3">
    <source>
        <dbReference type="SAM" id="MobiDB-lite"/>
    </source>
</evidence>
<dbReference type="EMBL" id="FM211192">
    <property type="protein sequence ID" value="CAR71651.1"/>
    <property type="molecule type" value="Genomic_DNA"/>
</dbReference>
<dbReference type="SMR" id="B8ZRT4"/>
<dbReference type="KEGG" id="mlb:MLBr01556"/>
<dbReference type="HOGENOM" id="CLU_006301_9_3_11"/>
<dbReference type="Proteomes" id="UP000006900">
    <property type="component" value="Chromosome"/>
</dbReference>
<dbReference type="GO" id="GO:0005829">
    <property type="term" value="C:cytosol"/>
    <property type="evidence" value="ECO:0007669"/>
    <property type="project" value="TreeGrafter"/>
</dbReference>
<dbReference type="GO" id="GO:0005525">
    <property type="term" value="F:GTP binding"/>
    <property type="evidence" value="ECO:0007669"/>
    <property type="project" value="UniProtKB-KW"/>
</dbReference>
<dbReference type="GO" id="GO:0003924">
    <property type="term" value="F:GTPase activity"/>
    <property type="evidence" value="ECO:0007669"/>
    <property type="project" value="UniProtKB-UniRule"/>
</dbReference>
<dbReference type="GO" id="GO:0003743">
    <property type="term" value="F:translation initiation factor activity"/>
    <property type="evidence" value="ECO:0007669"/>
    <property type="project" value="UniProtKB-UniRule"/>
</dbReference>
<dbReference type="CDD" id="cd01887">
    <property type="entry name" value="IF2_eIF5B"/>
    <property type="match status" value="1"/>
</dbReference>
<dbReference type="CDD" id="cd03702">
    <property type="entry name" value="IF2_mtIF2_II"/>
    <property type="match status" value="1"/>
</dbReference>
<dbReference type="CDD" id="cd03692">
    <property type="entry name" value="mtIF2_IVc"/>
    <property type="match status" value="1"/>
</dbReference>
<dbReference type="FunFam" id="1.10.10.2480:FF:000003">
    <property type="entry name" value="Translation initiation factor IF-2"/>
    <property type="match status" value="1"/>
</dbReference>
<dbReference type="FunFam" id="2.40.30.10:FF:000007">
    <property type="entry name" value="Translation initiation factor IF-2"/>
    <property type="match status" value="1"/>
</dbReference>
<dbReference type="FunFam" id="2.40.30.10:FF:000008">
    <property type="entry name" value="Translation initiation factor IF-2"/>
    <property type="match status" value="1"/>
</dbReference>
<dbReference type="FunFam" id="3.40.50.10050:FF:000001">
    <property type="entry name" value="Translation initiation factor IF-2"/>
    <property type="match status" value="1"/>
</dbReference>
<dbReference type="FunFam" id="3.40.50.300:FF:000019">
    <property type="entry name" value="Translation initiation factor IF-2"/>
    <property type="match status" value="1"/>
</dbReference>
<dbReference type="Gene3D" id="1.10.10.2480">
    <property type="match status" value="1"/>
</dbReference>
<dbReference type="Gene3D" id="3.40.50.300">
    <property type="entry name" value="P-loop containing nucleotide triphosphate hydrolases"/>
    <property type="match status" value="1"/>
</dbReference>
<dbReference type="Gene3D" id="2.40.30.10">
    <property type="entry name" value="Translation factors"/>
    <property type="match status" value="2"/>
</dbReference>
<dbReference type="Gene3D" id="3.40.50.10050">
    <property type="entry name" value="Translation initiation factor IF- 2, domain 3"/>
    <property type="match status" value="1"/>
</dbReference>
<dbReference type="HAMAP" id="MF_00100_B">
    <property type="entry name" value="IF_2_B"/>
    <property type="match status" value="1"/>
</dbReference>
<dbReference type="InterPro" id="IPR053905">
    <property type="entry name" value="EF-G-like_DII"/>
</dbReference>
<dbReference type="InterPro" id="IPR004161">
    <property type="entry name" value="EFTu-like_2"/>
</dbReference>
<dbReference type="InterPro" id="IPR044145">
    <property type="entry name" value="IF2_II"/>
</dbReference>
<dbReference type="InterPro" id="IPR006847">
    <property type="entry name" value="IF2_N"/>
</dbReference>
<dbReference type="InterPro" id="IPR027417">
    <property type="entry name" value="P-loop_NTPase"/>
</dbReference>
<dbReference type="InterPro" id="IPR005225">
    <property type="entry name" value="Small_GTP-bd"/>
</dbReference>
<dbReference type="InterPro" id="IPR000795">
    <property type="entry name" value="T_Tr_GTP-bd_dom"/>
</dbReference>
<dbReference type="InterPro" id="IPR000178">
    <property type="entry name" value="TF_IF2_bacterial-like"/>
</dbReference>
<dbReference type="InterPro" id="IPR015760">
    <property type="entry name" value="TIF_IF2"/>
</dbReference>
<dbReference type="InterPro" id="IPR023115">
    <property type="entry name" value="TIF_IF2_dom3"/>
</dbReference>
<dbReference type="InterPro" id="IPR036925">
    <property type="entry name" value="TIF_IF2_dom3_sf"/>
</dbReference>
<dbReference type="InterPro" id="IPR009000">
    <property type="entry name" value="Transl_B-barrel_sf"/>
</dbReference>
<dbReference type="NCBIfam" id="TIGR00487">
    <property type="entry name" value="IF-2"/>
    <property type="match status" value="1"/>
</dbReference>
<dbReference type="NCBIfam" id="TIGR00231">
    <property type="entry name" value="small_GTP"/>
    <property type="match status" value="1"/>
</dbReference>
<dbReference type="PANTHER" id="PTHR43381:SF5">
    <property type="entry name" value="TR-TYPE G DOMAIN-CONTAINING PROTEIN"/>
    <property type="match status" value="1"/>
</dbReference>
<dbReference type="PANTHER" id="PTHR43381">
    <property type="entry name" value="TRANSLATION INITIATION FACTOR IF-2-RELATED"/>
    <property type="match status" value="1"/>
</dbReference>
<dbReference type="Pfam" id="PF22042">
    <property type="entry name" value="EF-G_D2"/>
    <property type="match status" value="1"/>
</dbReference>
<dbReference type="Pfam" id="PF00009">
    <property type="entry name" value="GTP_EFTU"/>
    <property type="match status" value="1"/>
</dbReference>
<dbReference type="Pfam" id="PF03144">
    <property type="entry name" value="GTP_EFTU_D2"/>
    <property type="match status" value="1"/>
</dbReference>
<dbReference type="Pfam" id="PF11987">
    <property type="entry name" value="IF-2"/>
    <property type="match status" value="1"/>
</dbReference>
<dbReference type="Pfam" id="PF04760">
    <property type="entry name" value="IF2_N"/>
    <property type="match status" value="2"/>
</dbReference>
<dbReference type="PRINTS" id="PR00315">
    <property type="entry name" value="ELONGATNFCT"/>
</dbReference>
<dbReference type="SUPFAM" id="SSF52156">
    <property type="entry name" value="Initiation factor IF2/eIF5b, domain 3"/>
    <property type="match status" value="1"/>
</dbReference>
<dbReference type="SUPFAM" id="SSF52540">
    <property type="entry name" value="P-loop containing nucleoside triphosphate hydrolases"/>
    <property type="match status" value="1"/>
</dbReference>
<dbReference type="SUPFAM" id="SSF50447">
    <property type="entry name" value="Translation proteins"/>
    <property type="match status" value="2"/>
</dbReference>
<dbReference type="PROSITE" id="PS51722">
    <property type="entry name" value="G_TR_2"/>
    <property type="match status" value="1"/>
</dbReference>
<dbReference type="PROSITE" id="PS01176">
    <property type="entry name" value="IF2"/>
    <property type="match status" value="1"/>
</dbReference>
<organism>
    <name type="scientific">Mycobacterium leprae (strain Br4923)</name>
    <dbReference type="NCBI Taxonomy" id="561304"/>
    <lineage>
        <taxon>Bacteria</taxon>
        <taxon>Bacillati</taxon>
        <taxon>Actinomycetota</taxon>
        <taxon>Actinomycetes</taxon>
        <taxon>Mycobacteriales</taxon>
        <taxon>Mycobacteriaceae</taxon>
        <taxon>Mycobacterium</taxon>
    </lineage>
</organism>